<gene>
    <name evidence="1" type="primary">smg</name>
    <name type="ordered locus">Sputcn32_0027</name>
</gene>
<reference key="1">
    <citation type="submission" date="2007-04" db="EMBL/GenBank/DDBJ databases">
        <title>Complete sequence of Shewanella putrefaciens CN-32.</title>
        <authorList>
            <consortium name="US DOE Joint Genome Institute"/>
            <person name="Copeland A."/>
            <person name="Lucas S."/>
            <person name="Lapidus A."/>
            <person name="Barry K."/>
            <person name="Detter J.C."/>
            <person name="Glavina del Rio T."/>
            <person name="Hammon N."/>
            <person name="Israni S."/>
            <person name="Dalin E."/>
            <person name="Tice H."/>
            <person name="Pitluck S."/>
            <person name="Chain P."/>
            <person name="Malfatti S."/>
            <person name="Shin M."/>
            <person name="Vergez L."/>
            <person name="Schmutz J."/>
            <person name="Larimer F."/>
            <person name="Land M."/>
            <person name="Hauser L."/>
            <person name="Kyrpides N."/>
            <person name="Mikhailova N."/>
            <person name="Romine M.F."/>
            <person name="Fredrickson J."/>
            <person name="Tiedje J."/>
            <person name="Richardson P."/>
        </authorList>
    </citation>
    <scope>NUCLEOTIDE SEQUENCE [LARGE SCALE GENOMIC DNA]</scope>
    <source>
        <strain>CN-32 / ATCC BAA-453</strain>
    </source>
</reference>
<protein>
    <recommendedName>
        <fullName evidence="1">Protein Smg homolog</fullName>
    </recommendedName>
</protein>
<name>SMG_SHEPC</name>
<organism>
    <name type="scientific">Shewanella putrefaciens (strain CN-32 / ATCC BAA-453)</name>
    <dbReference type="NCBI Taxonomy" id="319224"/>
    <lineage>
        <taxon>Bacteria</taxon>
        <taxon>Pseudomonadati</taxon>
        <taxon>Pseudomonadota</taxon>
        <taxon>Gammaproteobacteria</taxon>
        <taxon>Alteromonadales</taxon>
        <taxon>Shewanellaceae</taxon>
        <taxon>Shewanella</taxon>
    </lineage>
</organism>
<accession>A4Y1D0</accession>
<dbReference type="EMBL" id="CP000681">
    <property type="protein sequence ID" value="ABP73763.1"/>
    <property type="molecule type" value="Genomic_DNA"/>
</dbReference>
<dbReference type="SMR" id="A4Y1D0"/>
<dbReference type="STRING" id="319224.Sputcn32_0027"/>
<dbReference type="KEGG" id="spc:Sputcn32_0027"/>
<dbReference type="eggNOG" id="COG2922">
    <property type="taxonomic scope" value="Bacteria"/>
</dbReference>
<dbReference type="HOGENOM" id="CLU_133242_0_0_6"/>
<dbReference type="HAMAP" id="MF_00598">
    <property type="entry name" value="Smg"/>
    <property type="match status" value="1"/>
</dbReference>
<dbReference type="InterPro" id="IPR007456">
    <property type="entry name" value="Smg"/>
</dbReference>
<dbReference type="NCBIfam" id="NF002897">
    <property type="entry name" value="PRK03430.1"/>
    <property type="match status" value="1"/>
</dbReference>
<dbReference type="PANTHER" id="PTHR38692">
    <property type="entry name" value="PROTEIN SMG"/>
    <property type="match status" value="1"/>
</dbReference>
<dbReference type="PANTHER" id="PTHR38692:SF1">
    <property type="entry name" value="PROTEIN SMG"/>
    <property type="match status" value="1"/>
</dbReference>
<dbReference type="Pfam" id="PF04361">
    <property type="entry name" value="DUF494"/>
    <property type="match status" value="1"/>
</dbReference>
<comment type="similarity">
    <text evidence="1">Belongs to the Smg family.</text>
</comment>
<proteinExistence type="inferred from homology"/>
<feature type="chain" id="PRO_1000025668" description="Protein Smg homolog">
    <location>
        <begin position="1"/>
        <end position="157"/>
    </location>
</feature>
<evidence type="ECO:0000255" key="1">
    <source>
        <dbReference type="HAMAP-Rule" id="MF_00598"/>
    </source>
</evidence>
<sequence>MFDILMYLFENYVHSEVELLVDEDELTKELTRAGFHQSEILKALTWLERLAELQEGDKPYLCNHDQHSFRIYTKDEMDKLDVESRGFLLFLEQVKVLNVETREMVIDRVMELDEPTLILEDLKWVILMVLFNAPGHESAYEQMEDLIFEQPEGRLHS</sequence>